<name>PRIL_METTH</name>
<sequence>MVSSLFINPFSEDAREIVRKYGSLDTIDDTRDELLEIGRRTRGQNLADNSLLPASIAELAVKRLEWYLRRQRKDFNHRDYAYLMNPEIEEYDVLAFYILAQAAGAGFMKASREARLVVESAGAMVEDRLNVFGGEREEIMAEVLYELGSEGLRWTELADLLGSGKLKLTDLILKEGRVIIDRDEFITSFQDSIRDRSPDRLYDILVGLEVRETMISRMIMQRTEEYIGMVREMSSTVEVHPLILETAERIRETVEEIMSFTGGPVKSARPGKLVQEAFPPCIRGTLDGVRSGNRNDAIVLLLTSFISYARLYPSVFRDRTPMKVSDLDPDLRITLGEILPVIYDAADRCEPPLFEDDPQEKLNITAKLGFGVHDMPELENEGESKWYTPMSCEKIKIHLPDLCRPDKLCSSISNPLTYYNRKRWKLRSSGEKEE</sequence>
<organism>
    <name type="scientific">Methanothermobacter thermautotrophicus (strain ATCC 29096 / DSM 1053 / JCM 10044 / NBRC 100330 / Delta H)</name>
    <name type="common">Methanobacterium thermoautotrophicum</name>
    <dbReference type="NCBI Taxonomy" id="187420"/>
    <lineage>
        <taxon>Archaea</taxon>
        <taxon>Methanobacteriati</taxon>
        <taxon>Methanobacteriota</taxon>
        <taxon>Methanomada group</taxon>
        <taxon>Methanobacteria</taxon>
        <taxon>Methanobacteriales</taxon>
        <taxon>Methanobacteriaceae</taxon>
        <taxon>Methanothermobacter</taxon>
    </lineage>
</organism>
<gene>
    <name evidence="1" type="primary">priL</name>
    <name type="synonym">priB</name>
    <name type="ordered locus">MTH_586</name>
</gene>
<accession>O26686</accession>
<proteinExistence type="inferred from homology"/>
<reference key="1">
    <citation type="journal article" date="1997" name="J. Bacteriol.">
        <title>Complete genome sequence of Methanobacterium thermoautotrophicum deltaH: functional analysis and comparative genomics.</title>
        <authorList>
            <person name="Smith D.R."/>
            <person name="Doucette-Stamm L.A."/>
            <person name="Deloughery C."/>
            <person name="Lee H.-M."/>
            <person name="Dubois J."/>
            <person name="Aldredge T."/>
            <person name="Bashirzadeh R."/>
            <person name="Blakely D."/>
            <person name="Cook R."/>
            <person name="Gilbert K."/>
            <person name="Harrison D."/>
            <person name="Hoang L."/>
            <person name="Keagle P."/>
            <person name="Lumm W."/>
            <person name="Pothier B."/>
            <person name="Qiu D."/>
            <person name="Spadafora R."/>
            <person name="Vicare R."/>
            <person name="Wang Y."/>
            <person name="Wierzbowski J."/>
            <person name="Gibson R."/>
            <person name="Jiwani N."/>
            <person name="Caruso A."/>
            <person name="Bush D."/>
            <person name="Safer H."/>
            <person name="Patwell D."/>
            <person name="Prabhakar S."/>
            <person name="McDougall S."/>
            <person name="Shimer G."/>
            <person name="Goyal A."/>
            <person name="Pietrovski S."/>
            <person name="Church G.M."/>
            <person name="Daniels C.J."/>
            <person name="Mao J.-I."/>
            <person name="Rice P."/>
            <person name="Noelling J."/>
            <person name="Reeve J.N."/>
        </authorList>
    </citation>
    <scope>NUCLEOTIDE SEQUENCE [LARGE SCALE GENOMIC DNA]</scope>
    <source>
        <strain>ATCC 29096 / DSM 1053 / JCM 10044 / NBRC 100330 / Delta H</strain>
    </source>
</reference>
<dbReference type="EMBL" id="AE000666">
    <property type="protein sequence ID" value="AAB85092.1"/>
    <property type="molecule type" value="Genomic_DNA"/>
</dbReference>
<dbReference type="PIR" id="F69177">
    <property type="entry name" value="F69177"/>
</dbReference>
<dbReference type="RefSeq" id="WP_010876225.1">
    <property type="nucleotide sequence ID" value="NC_000916.1"/>
</dbReference>
<dbReference type="STRING" id="187420.MTH_586"/>
<dbReference type="PaxDb" id="187420-MTH_586"/>
<dbReference type="DNASU" id="1470547"/>
<dbReference type="EnsemblBacteria" id="AAB85092">
    <property type="protein sequence ID" value="AAB85092"/>
    <property type="gene ID" value="MTH_586"/>
</dbReference>
<dbReference type="GeneID" id="1470547"/>
<dbReference type="GeneID" id="77401123"/>
<dbReference type="KEGG" id="mth:MTH_586"/>
<dbReference type="PATRIC" id="fig|187420.15.peg.565"/>
<dbReference type="HOGENOM" id="CLU_626450_0_0_2"/>
<dbReference type="InParanoid" id="O26686"/>
<dbReference type="Proteomes" id="UP000005223">
    <property type="component" value="Chromosome"/>
</dbReference>
<dbReference type="GO" id="GO:1990077">
    <property type="term" value="C:primosome complex"/>
    <property type="evidence" value="ECO:0007669"/>
    <property type="project" value="UniProtKB-KW"/>
</dbReference>
<dbReference type="GO" id="GO:0051539">
    <property type="term" value="F:4 iron, 4 sulfur cluster binding"/>
    <property type="evidence" value="ECO:0007669"/>
    <property type="project" value="UniProtKB-UniRule"/>
</dbReference>
<dbReference type="GO" id="GO:0003899">
    <property type="term" value="F:DNA-directed RNA polymerase activity"/>
    <property type="evidence" value="ECO:0007669"/>
    <property type="project" value="InterPro"/>
</dbReference>
<dbReference type="GO" id="GO:0046872">
    <property type="term" value="F:metal ion binding"/>
    <property type="evidence" value="ECO:0007669"/>
    <property type="project" value="UniProtKB-KW"/>
</dbReference>
<dbReference type="GO" id="GO:0006269">
    <property type="term" value="P:DNA replication, synthesis of primer"/>
    <property type="evidence" value="ECO:0007669"/>
    <property type="project" value="UniProtKB-UniRule"/>
</dbReference>
<dbReference type="CDD" id="cd06560">
    <property type="entry name" value="PriL"/>
    <property type="match status" value="1"/>
</dbReference>
<dbReference type="HAMAP" id="MF_00701">
    <property type="entry name" value="DNA_primase_lrg_arc"/>
    <property type="match status" value="1"/>
</dbReference>
<dbReference type="InterPro" id="IPR007238">
    <property type="entry name" value="DNA_primase_lsu_euk/arc"/>
</dbReference>
<dbReference type="InterPro" id="IPR023642">
    <property type="entry name" value="DNA_primase_lsu_PriL"/>
</dbReference>
<dbReference type="NCBIfam" id="NF003051">
    <property type="entry name" value="PRK03968.1"/>
    <property type="match status" value="1"/>
</dbReference>
<dbReference type="Pfam" id="PF04104">
    <property type="entry name" value="DNA_primase_lrg"/>
    <property type="match status" value="1"/>
</dbReference>
<dbReference type="SUPFAM" id="SSF140914">
    <property type="entry name" value="PriB N-terminal domain-like"/>
    <property type="match status" value="1"/>
</dbReference>
<feature type="chain" id="PRO_0000046783" description="DNA primase large subunit PriL">
    <location>
        <begin position="1"/>
        <end position="434"/>
    </location>
</feature>
<feature type="binding site" evidence="1">
    <location>
        <position position="281"/>
    </location>
    <ligand>
        <name>[4Fe-4S] cluster</name>
        <dbReference type="ChEBI" id="CHEBI:49883"/>
    </ligand>
</feature>
<feature type="binding site" evidence="1">
    <location>
        <position position="392"/>
    </location>
    <ligand>
        <name>[4Fe-4S] cluster</name>
        <dbReference type="ChEBI" id="CHEBI:49883"/>
    </ligand>
</feature>
<feature type="binding site" evidence="1">
    <location>
        <position position="403"/>
    </location>
    <ligand>
        <name>[4Fe-4S] cluster</name>
        <dbReference type="ChEBI" id="CHEBI:49883"/>
    </ligand>
</feature>
<feature type="binding site" evidence="1">
    <location>
        <position position="409"/>
    </location>
    <ligand>
        <name>[4Fe-4S] cluster</name>
        <dbReference type="ChEBI" id="CHEBI:49883"/>
    </ligand>
</feature>
<evidence type="ECO:0000255" key="1">
    <source>
        <dbReference type="HAMAP-Rule" id="MF_00701"/>
    </source>
</evidence>
<protein>
    <recommendedName>
        <fullName evidence="1">DNA primase large subunit PriL</fullName>
    </recommendedName>
</protein>
<comment type="function">
    <text evidence="1">Regulatory subunit of DNA primase, an RNA polymerase that catalyzes the synthesis of short RNA molecules used as primers for DNA polymerase during DNA replication. Stabilizes and modulates the activity of the small subunit, increasing the rate of DNA synthesis, and conferring RNA synthesis capability. The DNA polymerase activity may enable DNA primase to also catalyze primer extension after primer synthesis. May also play a role in DNA repair.</text>
</comment>
<comment type="cofactor">
    <cofactor evidence="1">
        <name>[4Fe-4S] cluster</name>
        <dbReference type="ChEBI" id="CHEBI:49883"/>
    </cofactor>
    <text evidence="1">Binds 1 [4Fe-4S] cluster.</text>
</comment>
<comment type="subunit">
    <text evidence="1">Heterodimer of a small subunit (PriS) and a large subunit (PriL).</text>
</comment>
<comment type="similarity">
    <text evidence="1">Belongs to the eukaryotic-type primase large subunit family.</text>
</comment>
<keyword id="KW-0004">4Fe-4S</keyword>
<keyword id="KW-0235">DNA replication</keyword>
<keyword id="KW-0408">Iron</keyword>
<keyword id="KW-0411">Iron-sulfur</keyword>
<keyword id="KW-0479">Metal-binding</keyword>
<keyword id="KW-0639">Primosome</keyword>
<keyword id="KW-1185">Reference proteome</keyword>